<gene>
    <name type="primary">vht1</name>
    <name type="ORF">SPAC1B3.16c</name>
</gene>
<dbReference type="EMBL" id="AY179181">
    <property type="protein sequence ID" value="AAO22560.1"/>
    <property type="molecule type" value="mRNA"/>
</dbReference>
<dbReference type="EMBL" id="CU329670">
    <property type="protein sequence ID" value="CAB11242.1"/>
    <property type="molecule type" value="Genomic_DNA"/>
</dbReference>
<dbReference type="PIR" id="T38035">
    <property type="entry name" value="T38035"/>
</dbReference>
<dbReference type="RefSeq" id="NP_594801.1">
    <property type="nucleotide sequence ID" value="NM_001020229.2"/>
</dbReference>
<dbReference type="BioGRID" id="278976">
    <property type="interactions" value="68"/>
</dbReference>
<dbReference type="FunCoup" id="O13880">
    <property type="interactions" value="2"/>
</dbReference>
<dbReference type="STRING" id="284812.O13880"/>
<dbReference type="TCDB" id="2.A.1.14.19">
    <property type="family name" value="the major facilitator superfamily (mfs)"/>
</dbReference>
<dbReference type="iPTMnet" id="O13880"/>
<dbReference type="PaxDb" id="4896-SPAC1B3.16c.1"/>
<dbReference type="EnsemblFungi" id="SPAC1B3.16c.1">
    <property type="protein sequence ID" value="SPAC1B3.16c.1:pep"/>
    <property type="gene ID" value="SPAC1B3.16c"/>
</dbReference>
<dbReference type="GeneID" id="2542518"/>
<dbReference type="KEGG" id="spo:2542518"/>
<dbReference type="PomBase" id="SPAC1B3.16c">
    <property type="gene designation" value="vht1"/>
</dbReference>
<dbReference type="VEuPathDB" id="FungiDB:SPAC1B3.16c"/>
<dbReference type="eggNOG" id="KOG2533">
    <property type="taxonomic scope" value="Eukaryota"/>
</dbReference>
<dbReference type="HOGENOM" id="CLU_001265_0_0_1"/>
<dbReference type="InParanoid" id="O13880"/>
<dbReference type="PhylomeDB" id="O13880"/>
<dbReference type="PRO" id="PR:O13880"/>
<dbReference type="Proteomes" id="UP000002485">
    <property type="component" value="Chromosome I"/>
</dbReference>
<dbReference type="GO" id="GO:0005886">
    <property type="term" value="C:plasma membrane"/>
    <property type="evidence" value="ECO:0000315"/>
    <property type="project" value="PomBase"/>
</dbReference>
<dbReference type="GO" id="GO:0015225">
    <property type="term" value="F:biotin transmembrane transporter activity"/>
    <property type="evidence" value="ECO:0000315"/>
    <property type="project" value="PomBase"/>
</dbReference>
<dbReference type="GO" id="GO:1901604">
    <property type="term" value="F:dethiobiotin transmembrane transporter activity"/>
    <property type="evidence" value="ECO:0000315"/>
    <property type="project" value="PomBase"/>
</dbReference>
<dbReference type="GO" id="GO:0015295">
    <property type="term" value="F:solute:proton symporter activity"/>
    <property type="evidence" value="ECO:0000315"/>
    <property type="project" value="PomBase"/>
</dbReference>
<dbReference type="GO" id="GO:1905135">
    <property type="term" value="P:biotin import across plasma membrane"/>
    <property type="evidence" value="ECO:0000315"/>
    <property type="project" value="PomBase"/>
</dbReference>
<dbReference type="GO" id="GO:1905136">
    <property type="term" value="P:dethiobiotin import across plasma membrane"/>
    <property type="evidence" value="ECO:0000315"/>
    <property type="project" value="PomBase"/>
</dbReference>
<dbReference type="CDD" id="cd17327">
    <property type="entry name" value="MFS_FEN2_like"/>
    <property type="match status" value="1"/>
</dbReference>
<dbReference type="FunFam" id="1.20.1250.20:FF:000399">
    <property type="entry name" value="MFS general substrate transporter"/>
    <property type="match status" value="1"/>
</dbReference>
<dbReference type="FunFam" id="1.20.1250.20:FF:000278">
    <property type="entry name" value="Putative MFS transporter"/>
    <property type="match status" value="1"/>
</dbReference>
<dbReference type="Gene3D" id="1.20.1250.20">
    <property type="entry name" value="MFS general substrate transporter like domains"/>
    <property type="match status" value="2"/>
</dbReference>
<dbReference type="InterPro" id="IPR011701">
    <property type="entry name" value="MFS"/>
</dbReference>
<dbReference type="InterPro" id="IPR036259">
    <property type="entry name" value="MFS_trans_sf"/>
</dbReference>
<dbReference type="PANTHER" id="PTHR43791">
    <property type="entry name" value="PERMEASE-RELATED"/>
    <property type="match status" value="1"/>
</dbReference>
<dbReference type="PANTHER" id="PTHR43791:SF33">
    <property type="entry name" value="VITAMIN H TRANSPORTER 1"/>
    <property type="match status" value="1"/>
</dbReference>
<dbReference type="Pfam" id="PF07690">
    <property type="entry name" value="MFS_1"/>
    <property type="match status" value="1"/>
</dbReference>
<dbReference type="SUPFAM" id="SSF103473">
    <property type="entry name" value="MFS general substrate transporter"/>
    <property type="match status" value="1"/>
</dbReference>
<reference key="1">
    <citation type="journal article" date="2003" name="Yeast">
        <title>Isolation and characterization of the plasma membrane biotin transporter from Schizosaccharomyces pombe.</title>
        <authorList>
            <person name="Stolz J."/>
        </authorList>
    </citation>
    <scope>NUCLEOTIDE SEQUENCE [MRNA]</scope>
    <scope>FUNCTION</scope>
</reference>
<reference key="2">
    <citation type="journal article" date="2002" name="Nature">
        <title>The genome sequence of Schizosaccharomyces pombe.</title>
        <authorList>
            <person name="Wood V."/>
            <person name="Gwilliam R."/>
            <person name="Rajandream M.A."/>
            <person name="Lyne M.H."/>
            <person name="Lyne R."/>
            <person name="Stewart A."/>
            <person name="Sgouros J.G."/>
            <person name="Peat N."/>
            <person name="Hayles J."/>
            <person name="Baker S.G."/>
            <person name="Basham D."/>
            <person name="Bowman S."/>
            <person name="Brooks K."/>
            <person name="Brown D."/>
            <person name="Brown S."/>
            <person name="Chillingworth T."/>
            <person name="Churcher C.M."/>
            <person name="Collins M."/>
            <person name="Connor R."/>
            <person name="Cronin A."/>
            <person name="Davis P."/>
            <person name="Feltwell T."/>
            <person name="Fraser A."/>
            <person name="Gentles S."/>
            <person name="Goble A."/>
            <person name="Hamlin N."/>
            <person name="Harris D.E."/>
            <person name="Hidalgo J."/>
            <person name="Hodgson G."/>
            <person name="Holroyd S."/>
            <person name="Hornsby T."/>
            <person name="Howarth S."/>
            <person name="Huckle E.J."/>
            <person name="Hunt S."/>
            <person name="Jagels K."/>
            <person name="James K.D."/>
            <person name="Jones L."/>
            <person name="Jones M."/>
            <person name="Leather S."/>
            <person name="McDonald S."/>
            <person name="McLean J."/>
            <person name="Mooney P."/>
            <person name="Moule S."/>
            <person name="Mungall K.L."/>
            <person name="Murphy L.D."/>
            <person name="Niblett D."/>
            <person name="Odell C."/>
            <person name="Oliver K."/>
            <person name="O'Neil S."/>
            <person name="Pearson D."/>
            <person name="Quail M.A."/>
            <person name="Rabbinowitsch E."/>
            <person name="Rutherford K.M."/>
            <person name="Rutter S."/>
            <person name="Saunders D."/>
            <person name="Seeger K."/>
            <person name="Sharp S."/>
            <person name="Skelton J."/>
            <person name="Simmonds M.N."/>
            <person name="Squares R."/>
            <person name="Squares S."/>
            <person name="Stevens K."/>
            <person name="Taylor K."/>
            <person name="Taylor R.G."/>
            <person name="Tivey A."/>
            <person name="Walsh S.V."/>
            <person name="Warren T."/>
            <person name="Whitehead S."/>
            <person name="Woodward J.R."/>
            <person name="Volckaert G."/>
            <person name="Aert R."/>
            <person name="Robben J."/>
            <person name="Grymonprez B."/>
            <person name="Weltjens I."/>
            <person name="Vanstreels E."/>
            <person name="Rieger M."/>
            <person name="Schaefer M."/>
            <person name="Mueller-Auer S."/>
            <person name="Gabel C."/>
            <person name="Fuchs M."/>
            <person name="Duesterhoeft A."/>
            <person name="Fritzc C."/>
            <person name="Holzer E."/>
            <person name="Moestl D."/>
            <person name="Hilbert H."/>
            <person name="Borzym K."/>
            <person name="Langer I."/>
            <person name="Beck A."/>
            <person name="Lehrach H."/>
            <person name="Reinhardt R."/>
            <person name="Pohl T.M."/>
            <person name="Eger P."/>
            <person name="Zimmermann W."/>
            <person name="Wedler H."/>
            <person name="Wambutt R."/>
            <person name="Purnelle B."/>
            <person name="Goffeau A."/>
            <person name="Cadieu E."/>
            <person name="Dreano S."/>
            <person name="Gloux S."/>
            <person name="Lelaure V."/>
            <person name="Mottier S."/>
            <person name="Galibert F."/>
            <person name="Aves S.J."/>
            <person name="Xiang Z."/>
            <person name="Hunt C."/>
            <person name="Moore K."/>
            <person name="Hurst S.M."/>
            <person name="Lucas M."/>
            <person name="Rochet M."/>
            <person name="Gaillardin C."/>
            <person name="Tallada V.A."/>
            <person name="Garzon A."/>
            <person name="Thode G."/>
            <person name="Daga R.R."/>
            <person name="Cruzado L."/>
            <person name="Jimenez J."/>
            <person name="Sanchez M."/>
            <person name="del Rey F."/>
            <person name="Benito J."/>
            <person name="Dominguez A."/>
            <person name="Revuelta J.L."/>
            <person name="Moreno S."/>
            <person name="Armstrong J."/>
            <person name="Forsburg S.L."/>
            <person name="Cerutti L."/>
            <person name="Lowe T."/>
            <person name="McCombie W.R."/>
            <person name="Paulsen I."/>
            <person name="Potashkin J."/>
            <person name="Shpakovski G.V."/>
            <person name="Ussery D."/>
            <person name="Barrell B.G."/>
            <person name="Nurse P."/>
        </authorList>
    </citation>
    <scope>NUCLEOTIDE SEQUENCE [LARGE SCALE GENOMIC DNA]</scope>
    <source>
        <strain>972 / ATCC 24843</strain>
    </source>
</reference>
<feature type="chain" id="PRO_0000121371" description="Vitamin H transporter 1">
    <location>
        <begin position="1"/>
        <end position="568"/>
    </location>
</feature>
<feature type="transmembrane region" description="Helical" evidence="1">
    <location>
        <begin position="85"/>
        <end position="105"/>
    </location>
</feature>
<feature type="transmembrane region" description="Helical" evidence="1">
    <location>
        <begin position="123"/>
        <end position="143"/>
    </location>
</feature>
<feature type="transmembrane region" description="Helical" evidence="1">
    <location>
        <begin position="158"/>
        <end position="178"/>
    </location>
</feature>
<feature type="transmembrane region" description="Helical" evidence="1">
    <location>
        <begin position="187"/>
        <end position="207"/>
    </location>
</feature>
<feature type="transmembrane region" description="Helical" evidence="1">
    <location>
        <begin position="222"/>
        <end position="242"/>
    </location>
</feature>
<feature type="transmembrane region" description="Helical" evidence="1">
    <location>
        <begin position="257"/>
        <end position="277"/>
    </location>
</feature>
<feature type="transmembrane region" description="Helical" evidence="1">
    <location>
        <begin position="345"/>
        <end position="365"/>
    </location>
</feature>
<feature type="transmembrane region" description="Helical" evidence="1">
    <location>
        <begin position="384"/>
        <end position="404"/>
    </location>
</feature>
<feature type="transmembrane region" description="Helical" evidence="1">
    <location>
        <begin position="411"/>
        <end position="431"/>
    </location>
</feature>
<feature type="transmembrane region" description="Helical" evidence="1">
    <location>
        <begin position="439"/>
        <end position="459"/>
    </location>
</feature>
<feature type="transmembrane region" description="Helical" evidence="1">
    <location>
        <begin position="470"/>
        <end position="490"/>
    </location>
</feature>
<feature type="transmembrane region" description="Helical" evidence="1">
    <location>
        <begin position="508"/>
        <end position="528"/>
    </location>
</feature>
<feature type="region of interest" description="Disordered" evidence="2">
    <location>
        <begin position="547"/>
        <end position="568"/>
    </location>
</feature>
<proteinExistence type="evidence at transcript level"/>
<accession>O13880</accession>
<sequence>MASEWPETSRASSVEENPKLNIPEIVESVSDSKPSLKNQFSTTVIDSSDLNVFNDGAETTVKEQEFTSSELRRLQKLRLKMDLRIIPCLWILYFLSCCLRFTVSLSFTMNTAQGHSLIQTLSGYSAHYLALGLALFYVGYIIFEVPSNLMMAFIEPRIWVSRIQLTIGVVGACHAVLGTKHGNAQSYVALRFFLGVAESGLWPGLAYYMSRWYRGKHLGKRIGWYYTAAQIAAAAVSLVSAGFQKMDGARGLYGYQWMFLIWGVVAIAQALSIPWWLPAVASKEHRKSLSSFIPLPKWMKTLSPQRIGFLTPADKSLHSRYIAEMNVGKRWQWSDLLKSCLDLRVWPFILMYFGIVGVGNGIFNYCTLIIEEINPSFSGIDISLLNAPIWLADALGIVTVMPLYDRFHKKFSFFTGSCLIIIAGLAVANYAPRAWSRYGGLLMIGFGLGPTVPICMAWCSASMAKTYGDVGVASSLALVTGLGNLGSVVTTYALYSGWPGDPTFRKSNDVCIALIGVSIIACGIEFLLDKTGFGQFNASFNNHDHEVEDEQEMTDIKPALPSSQQADA</sequence>
<protein>
    <recommendedName>
        <fullName>Vitamin H transporter 1</fullName>
    </recommendedName>
    <alternativeName>
        <fullName>H(+)/biotin symporter vht1</fullName>
    </alternativeName>
</protein>
<comment type="function">
    <text evidence="3">Involved in uptake of biotin and desthiobiotin with the concomitant entry of protons.</text>
</comment>
<comment type="subcellular location">
    <subcellularLocation>
        <location evidence="4">Membrane</location>
        <topology evidence="4">Multi-pass membrane protein</topology>
    </subcellularLocation>
</comment>
<comment type="similarity">
    <text evidence="4">Belongs to the major facilitator superfamily. Allantoate permease family.</text>
</comment>
<keyword id="KW-0092">Biotin</keyword>
<keyword id="KW-0472">Membrane</keyword>
<keyword id="KW-1185">Reference proteome</keyword>
<keyword id="KW-0769">Symport</keyword>
<keyword id="KW-0812">Transmembrane</keyword>
<keyword id="KW-1133">Transmembrane helix</keyword>
<keyword id="KW-0813">Transport</keyword>
<evidence type="ECO:0000255" key="1"/>
<evidence type="ECO:0000256" key="2">
    <source>
        <dbReference type="SAM" id="MobiDB-lite"/>
    </source>
</evidence>
<evidence type="ECO:0000269" key="3">
    <source>
    </source>
</evidence>
<evidence type="ECO:0000305" key="4"/>
<name>VHT1_SCHPO</name>
<organism>
    <name type="scientific">Schizosaccharomyces pombe (strain 972 / ATCC 24843)</name>
    <name type="common">Fission yeast</name>
    <dbReference type="NCBI Taxonomy" id="284812"/>
    <lineage>
        <taxon>Eukaryota</taxon>
        <taxon>Fungi</taxon>
        <taxon>Dikarya</taxon>
        <taxon>Ascomycota</taxon>
        <taxon>Taphrinomycotina</taxon>
        <taxon>Schizosaccharomycetes</taxon>
        <taxon>Schizosaccharomycetales</taxon>
        <taxon>Schizosaccharomycetaceae</taxon>
        <taxon>Schizosaccharomyces</taxon>
    </lineage>
</organism>